<protein>
    <recommendedName>
        <fullName evidence="1">Lipoyl synthase, mitochondrial</fullName>
        <ecNumber evidence="1">2.8.1.8</ecNumber>
    </recommendedName>
    <alternativeName>
        <fullName evidence="1">Lipoate synthase</fullName>
        <shortName evidence="1">LS</shortName>
        <shortName evidence="1">Lip-syn</shortName>
    </alternativeName>
    <alternativeName>
        <fullName evidence="1">Lipoic acid synthase</fullName>
    </alternativeName>
</protein>
<sequence length="364" mass="41106">MLRRLNSPTAILVRTASTRTEKLEEIRDRLSKGPNFQDFIQNSDNSKDDFENYDGKLRREKGETQQLRLPPWLKTTIPMGKNYAKIKSQLRDLKLSTVCEEARCPNIGECWGGGEHGTQTATIMLMGDTCTRGCRFCSVKTARAPPPLDVNEPVNTAKAISSWGLDYIVLTSVDRDDLPDGGSKHIAETVREIKARNSNIFVECLVPDFRGNLECVQTIAGCGLDVYAHNIETVEKLTPFVRDRRAHYRQTLKVLNEAKQFNPNLITKSSLMLGLGETDAEVEQTMLDLREAGVECLTLGQYMQPTKRHLKVIEYVTPEKFKHWEQRGNELGFLYTASGPLVRSSYKAGEFFITSILANRRKSV</sequence>
<organism>
    <name type="scientific">Drosophila grimshawi</name>
    <name type="common">Hawaiian fruit fly</name>
    <name type="synonym">Idiomyia grimshawi</name>
    <dbReference type="NCBI Taxonomy" id="7222"/>
    <lineage>
        <taxon>Eukaryota</taxon>
        <taxon>Metazoa</taxon>
        <taxon>Ecdysozoa</taxon>
        <taxon>Arthropoda</taxon>
        <taxon>Hexapoda</taxon>
        <taxon>Insecta</taxon>
        <taxon>Pterygota</taxon>
        <taxon>Neoptera</taxon>
        <taxon>Endopterygota</taxon>
        <taxon>Diptera</taxon>
        <taxon>Brachycera</taxon>
        <taxon>Muscomorpha</taxon>
        <taxon>Ephydroidea</taxon>
        <taxon>Drosophilidae</taxon>
        <taxon>Drosophila</taxon>
        <taxon>Hawaiian Drosophila</taxon>
    </lineage>
</organism>
<feature type="chain" id="PRO_0000398218" description="Lipoyl synthase, mitochondrial">
    <location>
        <begin position="1"/>
        <end position="364"/>
    </location>
</feature>
<feature type="domain" description="Radical SAM core" evidence="2">
    <location>
        <begin position="115"/>
        <end position="334"/>
    </location>
</feature>
<feature type="region of interest" description="Disordered" evidence="3">
    <location>
        <begin position="34"/>
        <end position="53"/>
    </location>
</feature>
<feature type="binding site" evidence="1">
    <location>
        <position position="99"/>
    </location>
    <ligand>
        <name>[4Fe-4S] cluster</name>
        <dbReference type="ChEBI" id="CHEBI:49883"/>
        <label>1</label>
    </ligand>
</feature>
<feature type="binding site" evidence="1">
    <location>
        <position position="104"/>
    </location>
    <ligand>
        <name>[4Fe-4S] cluster</name>
        <dbReference type="ChEBI" id="CHEBI:49883"/>
        <label>1</label>
    </ligand>
</feature>
<feature type="binding site" evidence="1">
    <location>
        <position position="110"/>
    </location>
    <ligand>
        <name>[4Fe-4S] cluster</name>
        <dbReference type="ChEBI" id="CHEBI:49883"/>
        <label>1</label>
    </ligand>
</feature>
<feature type="binding site" evidence="1">
    <location>
        <position position="130"/>
    </location>
    <ligand>
        <name>[4Fe-4S] cluster</name>
        <dbReference type="ChEBI" id="CHEBI:49883"/>
        <label>2</label>
        <note>4Fe-4S-S-AdoMet</note>
    </ligand>
</feature>
<feature type="binding site" evidence="1">
    <location>
        <position position="134"/>
    </location>
    <ligand>
        <name>[4Fe-4S] cluster</name>
        <dbReference type="ChEBI" id="CHEBI:49883"/>
        <label>2</label>
        <note>4Fe-4S-S-AdoMet</note>
    </ligand>
</feature>
<feature type="binding site" evidence="1">
    <location>
        <position position="137"/>
    </location>
    <ligand>
        <name>[4Fe-4S] cluster</name>
        <dbReference type="ChEBI" id="CHEBI:49883"/>
        <label>2</label>
        <note>4Fe-4S-S-AdoMet</note>
    </ligand>
</feature>
<feature type="binding site" evidence="1">
    <location>
        <position position="345"/>
    </location>
    <ligand>
        <name>[4Fe-4S] cluster</name>
        <dbReference type="ChEBI" id="CHEBI:49883"/>
        <label>1</label>
    </ligand>
</feature>
<keyword id="KW-0004">4Fe-4S</keyword>
<keyword id="KW-0408">Iron</keyword>
<keyword id="KW-0411">Iron-sulfur</keyword>
<keyword id="KW-0479">Metal-binding</keyword>
<keyword id="KW-0496">Mitochondrion</keyword>
<keyword id="KW-1185">Reference proteome</keyword>
<keyword id="KW-0949">S-adenosyl-L-methionine</keyword>
<keyword id="KW-0808">Transferase</keyword>
<proteinExistence type="inferred from homology"/>
<comment type="function">
    <text evidence="1">Catalyzes the radical-mediated insertion of two sulfur atoms into the C-6 and C-8 positions of the octanoyl moiety bound to the lipoyl domains of lipoate-dependent enzymes, thereby converting the octanoylated domains into lipoylated derivatives.</text>
</comment>
<comment type="catalytic activity">
    <reaction evidence="1">
        <text>[[Fe-S] cluster scaffold protein carrying a second [4Fe-4S](2+) cluster] + N(6)-octanoyl-L-lysyl-[protein] + 2 oxidized [2Fe-2S]-[ferredoxin] + 2 S-adenosyl-L-methionine + 4 H(+) = [[Fe-S] cluster scaffold protein] + N(6)-[(R)-dihydrolipoyl]-L-lysyl-[protein] + 4 Fe(3+) + 2 hydrogen sulfide + 2 5'-deoxyadenosine + 2 L-methionine + 2 reduced [2Fe-2S]-[ferredoxin]</text>
        <dbReference type="Rhea" id="RHEA:16585"/>
        <dbReference type="Rhea" id="RHEA-COMP:9928"/>
        <dbReference type="Rhea" id="RHEA-COMP:10000"/>
        <dbReference type="Rhea" id="RHEA-COMP:10001"/>
        <dbReference type="Rhea" id="RHEA-COMP:10475"/>
        <dbReference type="Rhea" id="RHEA-COMP:14568"/>
        <dbReference type="Rhea" id="RHEA-COMP:14569"/>
        <dbReference type="ChEBI" id="CHEBI:15378"/>
        <dbReference type="ChEBI" id="CHEBI:17319"/>
        <dbReference type="ChEBI" id="CHEBI:29034"/>
        <dbReference type="ChEBI" id="CHEBI:29919"/>
        <dbReference type="ChEBI" id="CHEBI:33722"/>
        <dbReference type="ChEBI" id="CHEBI:33737"/>
        <dbReference type="ChEBI" id="CHEBI:33738"/>
        <dbReference type="ChEBI" id="CHEBI:57844"/>
        <dbReference type="ChEBI" id="CHEBI:59789"/>
        <dbReference type="ChEBI" id="CHEBI:78809"/>
        <dbReference type="ChEBI" id="CHEBI:83100"/>
        <dbReference type="EC" id="2.8.1.8"/>
    </reaction>
</comment>
<comment type="cofactor">
    <cofactor evidence="1">
        <name>[4Fe-4S] cluster</name>
        <dbReference type="ChEBI" id="CHEBI:49883"/>
    </cofactor>
    <text evidence="1">Binds 2 [4Fe-4S] clusters per subunit. One cluster is coordinated with 3 cysteines and an exchangeable S-adenosyl-L-methionine.</text>
</comment>
<comment type="pathway">
    <text evidence="1">Protein modification; protein lipoylation via endogenous pathway; protein N(6)-(lipoyl)lysine from octanoyl-[acyl-carrier-protein]: step 2/2.</text>
</comment>
<comment type="subcellular location">
    <subcellularLocation>
        <location evidence="1">Mitochondrion</location>
    </subcellularLocation>
</comment>
<comment type="miscellaneous">
    <text evidence="1">This protein may be expected to contain an N-terminal transit peptide but none has been predicted.</text>
</comment>
<comment type="similarity">
    <text evidence="1">Belongs to the radical SAM superfamily. Lipoyl synthase family.</text>
</comment>
<name>LIAS_DROGR</name>
<dbReference type="EC" id="2.8.1.8" evidence="1"/>
<dbReference type="EMBL" id="CH916366">
    <property type="protein sequence ID" value="EDV97252.1"/>
    <property type="molecule type" value="Genomic_DNA"/>
</dbReference>
<dbReference type="SMR" id="B4J3F3"/>
<dbReference type="FunCoup" id="B4J3F3">
    <property type="interactions" value="1780"/>
</dbReference>
<dbReference type="STRING" id="7222.B4J3F3"/>
<dbReference type="EnsemblMetazoa" id="FBtr0152160">
    <property type="protein sequence ID" value="FBpp0150652"/>
    <property type="gene ID" value="FBgn0124217"/>
</dbReference>
<dbReference type="EnsemblMetazoa" id="XM_001984868.3">
    <property type="protein sequence ID" value="XP_001984904.1"/>
    <property type="gene ID" value="LOC6556978"/>
</dbReference>
<dbReference type="GeneID" id="6556978"/>
<dbReference type="KEGG" id="dgr:6556978"/>
<dbReference type="CTD" id="40259"/>
<dbReference type="eggNOG" id="KOG2672">
    <property type="taxonomic scope" value="Eukaryota"/>
</dbReference>
<dbReference type="HOGENOM" id="CLU_033144_2_0_1"/>
<dbReference type="InParanoid" id="B4J3F3"/>
<dbReference type="OMA" id="PYCDIDF"/>
<dbReference type="OrthoDB" id="3231at2759"/>
<dbReference type="PhylomeDB" id="B4J3F3"/>
<dbReference type="UniPathway" id="UPA00538">
    <property type="reaction ID" value="UER00593"/>
</dbReference>
<dbReference type="ChiTaRS" id="Las">
    <property type="organism name" value="fly"/>
</dbReference>
<dbReference type="Proteomes" id="UP000001070">
    <property type="component" value="Unassembled WGS sequence"/>
</dbReference>
<dbReference type="GO" id="GO:0005739">
    <property type="term" value="C:mitochondrion"/>
    <property type="evidence" value="ECO:0007669"/>
    <property type="project" value="UniProtKB-SubCell"/>
</dbReference>
<dbReference type="GO" id="GO:0051539">
    <property type="term" value="F:4 iron, 4 sulfur cluster binding"/>
    <property type="evidence" value="ECO:0007669"/>
    <property type="project" value="UniProtKB-UniRule"/>
</dbReference>
<dbReference type="GO" id="GO:0016992">
    <property type="term" value="F:lipoate synthase activity"/>
    <property type="evidence" value="ECO:0007669"/>
    <property type="project" value="UniProtKB-UniRule"/>
</dbReference>
<dbReference type="GO" id="GO:0046872">
    <property type="term" value="F:metal ion binding"/>
    <property type="evidence" value="ECO:0007669"/>
    <property type="project" value="UniProtKB-KW"/>
</dbReference>
<dbReference type="CDD" id="cd01335">
    <property type="entry name" value="Radical_SAM"/>
    <property type="match status" value="1"/>
</dbReference>
<dbReference type="FunFam" id="3.20.20.70:FF:000036">
    <property type="entry name" value="Lipoyl synthase, mitochondrial"/>
    <property type="match status" value="1"/>
</dbReference>
<dbReference type="Gene3D" id="3.20.20.70">
    <property type="entry name" value="Aldolase class I"/>
    <property type="match status" value="1"/>
</dbReference>
<dbReference type="HAMAP" id="MF_00206">
    <property type="entry name" value="Lipoyl_synth"/>
    <property type="match status" value="1"/>
</dbReference>
<dbReference type="InterPro" id="IPR013785">
    <property type="entry name" value="Aldolase_TIM"/>
</dbReference>
<dbReference type="InterPro" id="IPR006638">
    <property type="entry name" value="Elp3/MiaA/NifB-like_rSAM"/>
</dbReference>
<dbReference type="InterPro" id="IPR031691">
    <property type="entry name" value="LIAS_N"/>
</dbReference>
<dbReference type="InterPro" id="IPR003698">
    <property type="entry name" value="Lipoyl_synth"/>
</dbReference>
<dbReference type="InterPro" id="IPR007197">
    <property type="entry name" value="rSAM"/>
</dbReference>
<dbReference type="NCBIfam" id="TIGR00510">
    <property type="entry name" value="lipA"/>
    <property type="match status" value="1"/>
</dbReference>
<dbReference type="NCBIfam" id="NF004019">
    <property type="entry name" value="PRK05481.1"/>
    <property type="match status" value="1"/>
</dbReference>
<dbReference type="NCBIfam" id="NF009544">
    <property type="entry name" value="PRK12928.1"/>
    <property type="match status" value="1"/>
</dbReference>
<dbReference type="PANTHER" id="PTHR10949">
    <property type="entry name" value="LIPOYL SYNTHASE"/>
    <property type="match status" value="1"/>
</dbReference>
<dbReference type="PANTHER" id="PTHR10949:SF0">
    <property type="entry name" value="LIPOYL SYNTHASE, MITOCHONDRIAL"/>
    <property type="match status" value="1"/>
</dbReference>
<dbReference type="Pfam" id="PF16881">
    <property type="entry name" value="LIAS_N"/>
    <property type="match status" value="1"/>
</dbReference>
<dbReference type="Pfam" id="PF04055">
    <property type="entry name" value="Radical_SAM"/>
    <property type="match status" value="1"/>
</dbReference>
<dbReference type="PIRSF" id="PIRSF005963">
    <property type="entry name" value="Lipoyl_synth"/>
    <property type="match status" value="1"/>
</dbReference>
<dbReference type="SFLD" id="SFLDF00271">
    <property type="entry name" value="lipoyl_synthase"/>
    <property type="match status" value="1"/>
</dbReference>
<dbReference type="SFLD" id="SFLDG01058">
    <property type="entry name" value="lipoyl_synthase_like"/>
    <property type="match status" value="1"/>
</dbReference>
<dbReference type="SMART" id="SM00729">
    <property type="entry name" value="Elp3"/>
    <property type="match status" value="1"/>
</dbReference>
<dbReference type="SUPFAM" id="SSF102114">
    <property type="entry name" value="Radical SAM enzymes"/>
    <property type="match status" value="1"/>
</dbReference>
<dbReference type="PROSITE" id="PS51918">
    <property type="entry name" value="RADICAL_SAM"/>
    <property type="match status" value="1"/>
</dbReference>
<reference key="1">
    <citation type="journal article" date="2007" name="Nature">
        <title>Evolution of genes and genomes on the Drosophila phylogeny.</title>
        <authorList>
            <consortium name="Drosophila 12 genomes consortium"/>
        </authorList>
    </citation>
    <scope>NUCLEOTIDE SEQUENCE [LARGE SCALE GENOMIC DNA]</scope>
    <source>
        <strain>Tucson 15287-2541.00</strain>
    </source>
</reference>
<gene>
    <name evidence="1" type="primary">Las</name>
    <name type="ORF">GH16746</name>
</gene>
<accession>B4J3F3</accession>
<evidence type="ECO:0000255" key="1">
    <source>
        <dbReference type="HAMAP-Rule" id="MF_03123"/>
    </source>
</evidence>
<evidence type="ECO:0000255" key="2">
    <source>
        <dbReference type="PROSITE-ProRule" id="PRU01266"/>
    </source>
</evidence>
<evidence type="ECO:0000256" key="3">
    <source>
        <dbReference type="SAM" id="MobiDB-lite"/>
    </source>
</evidence>